<gene>
    <name evidence="12" type="primary">SLC25A46</name>
    <name type="synonym">TB1</name>
</gene>
<organism>
    <name type="scientific">Homo sapiens</name>
    <name type="common">Human</name>
    <dbReference type="NCBI Taxonomy" id="9606"/>
    <lineage>
        <taxon>Eukaryota</taxon>
        <taxon>Metazoa</taxon>
        <taxon>Chordata</taxon>
        <taxon>Craniata</taxon>
        <taxon>Vertebrata</taxon>
        <taxon>Euteleostomi</taxon>
        <taxon>Mammalia</taxon>
        <taxon>Eutheria</taxon>
        <taxon>Euarchontoglires</taxon>
        <taxon>Primates</taxon>
        <taxon>Haplorrhini</taxon>
        <taxon>Catarrhini</taxon>
        <taxon>Hominidae</taxon>
        <taxon>Homo</taxon>
    </lineage>
</organism>
<reference key="1">
    <citation type="journal article" date="1991" name="Science">
        <title>Identification of FAP locus genes from chromosome 5q21.</title>
        <authorList>
            <person name="Kinzler K.W."/>
            <person name="Nilbert M.C."/>
            <person name="Su L.-K."/>
            <person name="Vogelstein B."/>
            <person name="Bryan T.M."/>
            <person name="Levy D.B."/>
            <person name="Smith K.J."/>
            <person name="Preisinger A.C."/>
            <person name="Hedge P."/>
            <person name="McKechnie D."/>
            <person name="Finniear R."/>
            <person name="Markham A."/>
            <person name="Groffen J."/>
            <person name="Boguski M.S."/>
            <person name="Altschul S.F."/>
            <person name="Horii A.K."/>
            <person name="Ando H."/>
            <person name="Miyoshi Y."/>
            <person name="Miki Y."/>
            <person name="Nishisho I."/>
            <person name="Nakamura Y."/>
        </authorList>
    </citation>
    <scope>NUCLEOTIDE SEQUENCE [MRNA] (ISOFORM 1)</scope>
</reference>
<reference key="2">
    <citation type="journal article" date="2004" name="Nat. Genet.">
        <title>Complete sequencing and characterization of 21,243 full-length human cDNAs.</title>
        <authorList>
            <person name="Ota T."/>
            <person name="Suzuki Y."/>
            <person name="Nishikawa T."/>
            <person name="Otsuki T."/>
            <person name="Sugiyama T."/>
            <person name="Irie R."/>
            <person name="Wakamatsu A."/>
            <person name="Hayashi K."/>
            <person name="Sato H."/>
            <person name="Nagai K."/>
            <person name="Kimura K."/>
            <person name="Makita H."/>
            <person name="Sekine M."/>
            <person name="Obayashi M."/>
            <person name="Nishi T."/>
            <person name="Shibahara T."/>
            <person name="Tanaka T."/>
            <person name="Ishii S."/>
            <person name="Yamamoto J."/>
            <person name="Saito K."/>
            <person name="Kawai Y."/>
            <person name="Isono Y."/>
            <person name="Nakamura Y."/>
            <person name="Nagahari K."/>
            <person name="Murakami K."/>
            <person name="Yasuda T."/>
            <person name="Iwayanagi T."/>
            <person name="Wagatsuma M."/>
            <person name="Shiratori A."/>
            <person name="Sudo H."/>
            <person name="Hosoiri T."/>
            <person name="Kaku Y."/>
            <person name="Kodaira H."/>
            <person name="Kondo H."/>
            <person name="Sugawara M."/>
            <person name="Takahashi M."/>
            <person name="Kanda K."/>
            <person name="Yokoi T."/>
            <person name="Furuya T."/>
            <person name="Kikkawa E."/>
            <person name="Omura Y."/>
            <person name="Abe K."/>
            <person name="Kamihara K."/>
            <person name="Katsuta N."/>
            <person name="Sato K."/>
            <person name="Tanikawa M."/>
            <person name="Yamazaki M."/>
            <person name="Ninomiya K."/>
            <person name="Ishibashi T."/>
            <person name="Yamashita H."/>
            <person name="Murakawa K."/>
            <person name="Fujimori K."/>
            <person name="Tanai H."/>
            <person name="Kimata M."/>
            <person name="Watanabe M."/>
            <person name="Hiraoka S."/>
            <person name="Chiba Y."/>
            <person name="Ishida S."/>
            <person name="Ono Y."/>
            <person name="Takiguchi S."/>
            <person name="Watanabe S."/>
            <person name="Yosida M."/>
            <person name="Hotuta T."/>
            <person name="Kusano J."/>
            <person name="Kanehori K."/>
            <person name="Takahashi-Fujii A."/>
            <person name="Hara H."/>
            <person name="Tanase T.-O."/>
            <person name="Nomura Y."/>
            <person name="Togiya S."/>
            <person name="Komai F."/>
            <person name="Hara R."/>
            <person name="Takeuchi K."/>
            <person name="Arita M."/>
            <person name="Imose N."/>
            <person name="Musashino K."/>
            <person name="Yuuki H."/>
            <person name="Oshima A."/>
            <person name="Sasaki N."/>
            <person name="Aotsuka S."/>
            <person name="Yoshikawa Y."/>
            <person name="Matsunawa H."/>
            <person name="Ichihara T."/>
            <person name="Shiohata N."/>
            <person name="Sano S."/>
            <person name="Moriya S."/>
            <person name="Momiyama H."/>
            <person name="Satoh N."/>
            <person name="Takami S."/>
            <person name="Terashima Y."/>
            <person name="Suzuki O."/>
            <person name="Nakagawa S."/>
            <person name="Senoh A."/>
            <person name="Mizoguchi H."/>
            <person name="Goto Y."/>
            <person name="Shimizu F."/>
            <person name="Wakebe H."/>
            <person name="Hishigaki H."/>
            <person name="Watanabe T."/>
            <person name="Sugiyama A."/>
            <person name="Takemoto M."/>
            <person name="Kawakami B."/>
            <person name="Yamazaki M."/>
            <person name="Watanabe K."/>
            <person name="Kumagai A."/>
            <person name="Itakura S."/>
            <person name="Fukuzumi Y."/>
            <person name="Fujimori Y."/>
            <person name="Komiyama M."/>
            <person name="Tashiro H."/>
            <person name="Tanigami A."/>
            <person name="Fujiwara T."/>
            <person name="Ono T."/>
            <person name="Yamada K."/>
            <person name="Fujii Y."/>
            <person name="Ozaki K."/>
            <person name="Hirao M."/>
            <person name="Ohmori Y."/>
            <person name="Kawabata A."/>
            <person name="Hikiji T."/>
            <person name="Kobatake N."/>
            <person name="Inagaki H."/>
            <person name="Ikema Y."/>
            <person name="Okamoto S."/>
            <person name="Okitani R."/>
            <person name="Kawakami T."/>
            <person name="Noguchi S."/>
            <person name="Itoh T."/>
            <person name="Shigeta K."/>
            <person name="Senba T."/>
            <person name="Matsumura K."/>
            <person name="Nakajima Y."/>
            <person name="Mizuno T."/>
            <person name="Morinaga M."/>
            <person name="Sasaki M."/>
            <person name="Togashi T."/>
            <person name="Oyama M."/>
            <person name="Hata H."/>
            <person name="Watanabe M."/>
            <person name="Komatsu T."/>
            <person name="Mizushima-Sugano J."/>
            <person name="Satoh T."/>
            <person name="Shirai Y."/>
            <person name="Takahashi Y."/>
            <person name="Nakagawa K."/>
            <person name="Okumura K."/>
            <person name="Nagase T."/>
            <person name="Nomura N."/>
            <person name="Kikuchi H."/>
            <person name="Masuho Y."/>
            <person name="Yamashita R."/>
            <person name="Nakai K."/>
            <person name="Yada T."/>
            <person name="Nakamura Y."/>
            <person name="Ohara O."/>
            <person name="Isogai T."/>
            <person name="Sugano S."/>
        </authorList>
    </citation>
    <scope>NUCLEOTIDE SEQUENCE [LARGE SCALE MRNA] (ISOFORMS 1; 2 AND 3)</scope>
    <source>
        <tissue>Brain</tissue>
        <tissue>Placenta</tissue>
        <tissue>Thalamus</tissue>
    </source>
</reference>
<reference key="3">
    <citation type="journal article" date="2004" name="Nature">
        <title>The DNA sequence and comparative analysis of human chromosome 5.</title>
        <authorList>
            <person name="Schmutz J."/>
            <person name="Martin J."/>
            <person name="Terry A."/>
            <person name="Couronne O."/>
            <person name="Grimwood J."/>
            <person name="Lowry S."/>
            <person name="Gordon L.A."/>
            <person name="Scott D."/>
            <person name="Xie G."/>
            <person name="Huang W."/>
            <person name="Hellsten U."/>
            <person name="Tran-Gyamfi M."/>
            <person name="She X."/>
            <person name="Prabhakar S."/>
            <person name="Aerts A."/>
            <person name="Altherr M."/>
            <person name="Bajorek E."/>
            <person name="Black S."/>
            <person name="Branscomb E."/>
            <person name="Caoile C."/>
            <person name="Challacombe J.F."/>
            <person name="Chan Y.M."/>
            <person name="Denys M."/>
            <person name="Detter J.C."/>
            <person name="Escobar J."/>
            <person name="Flowers D."/>
            <person name="Fotopulos D."/>
            <person name="Glavina T."/>
            <person name="Gomez M."/>
            <person name="Gonzales E."/>
            <person name="Goodstein D."/>
            <person name="Grigoriev I."/>
            <person name="Groza M."/>
            <person name="Hammon N."/>
            <person name="Hawkins T."/>
            <person name="Haydu L."/>
            <person name="Israni S."/>
            <person name="Jett J."/>
            <person name="Kadner K."/>
            <person name="Kimball H."/>
            <person name="Kobayashi A."/>
            <person name="Lopez F."/>
            <person name="Lou Y."/>
            <person name="Martinez D."/>
            <person name="Medina C."/>
            <person name="Morgan J."/>
            <person name="Nandkeshwar R."/>
            <person name="Noonan J.P."/>
            <person name="Pitluck S."/>
            <person name="Pollard M."/>
            <person name="Predki P."/>
            <person name="Priest J."/>
            <person name="Ramirez L."/>
            <person name="Retterer J."/>
            <person name="Rodriguez A."/>
            <person name="Rogers S."/>
            <person name="Salamov A."/>
            <person name="Salazar A."/>
            <person name="Thayer N."/>
            <person name="Tice H."/>
            <person name="Tsai M."/>
            <person name="Ustaszewska A."/>
            <person name="Vo N."/>
            <person name="Wheeler J."/>
            <person name="Wu K."/>
            <person name="Yang J."/>
            <person name="Dickson M."/>
            <person name="Cheng J.-F."/>
            <person name="Eichler E.E."/>
            <person name="Olsen A."/>
            <person name="Pennacchio L.A."/>
            <person name="Rokhsar D.S."/>
            <person name="Richardson P."/>
            <person name="Lucas S.M."/>
            <person name="Myers R.M."/>
            <person name="Rubin E.M."/>
        </authorList>
    </citation>
    <scope>NUCLEOTIDE SEQUENCE [LARGE SCALE GENOMIC DNA]</scope>
</reference>
<reference key="4">
    <citation type="submission" date="2005-09" db="EMBL/GenBank/DDBJ databases">
        <authorList>
            <person name="Mural R.J."/>
            <person name="Istrail S."/>
            <person name="Sutton G.G."/>
            <person name="Florea L."/>
            <person name="Halpern A.L."/>
            <person name="Mobarry C.M."/>
            <person name="Lippert R."/>
            <person name="Walenz B."/>
            <person name="Shatkay H."/>
            <person name="Dew I."/>
            <person name="Miller J.R."/>
            <person name="Flanigan M.J."/>
            <person name="Edwards N.J."/>
            <person name="Bolanos R."/>
            <person name="Fasulo D."/>
            <person name="Halldorsson B.V."/>
            <person name="Hannenhalli S."/>
            <person name="Turner R."/>
            <person name="Yooseph S."/>
            <person name="Lu F."/>
            <person name="Nusskern D.R."/>
            <person name="Shue B.C."/>
            <person name="Zheng X.H."/>
            <person name="Zhong F."/>
            <person name="Delcher A.L."/>
            <person name="Huson D.H."/>
            <person name="Kravitz S.A."/>
            <person name="Mouchard L."/>
            <person name="Reinert K."/>
            <person name="Remington K.A."/>
            <person name="Clark A.G."/>
            <person name="Waterman M.S."/>
            <person name="Eichler E.E."/>
            <person name="Adams M.D."/>
            <person name="Hunkapiller M.W."/>
            <person name="Myers E.W."/>
            <person name="Venter J.C."/>
        </authorList>
    </citation>
    <scope>NUCLEOTIDE SEQUENCE [LARGE SCALE GENOMIC DNA]</scope>
</reference>
<reference key="5">
    <citation type="journal article" date="2004" name="Genome Res.">
        <title>The status, quality, and expansion of the NIH full-length cDNA project: the Mammalian Gene Collection (MGC).</title>
        <authorList>
            <consortium name="The MGC Project Team"/>
        </authorList>
    </citation>
    <scope>NUCLEOTIDE SEQUENCE [LARGE SCALE MRNA] (ISOFORM 1)</scope>
    <source>
        <tissue>Skin</tissue>
    </source>
</reference>
<reference key="6">
    <citation type="journal article" date="2006" name="Genomics">
        <title>Fourteen novel human members of mitochondrial solute carrier family 25 (SLC25) widely expressed in the central nervous system.</title>
        <authorList>
            <person name="Haitina T."/>
            <person name="Lindblom J."/>
            <person name="Renstroem T."/>
            <person name="Fredriksson R."/>
        </authorList>
    </citation>
    <scope>IDENTIFICATION</scope>
</reference>
<reference key="7">
    <citation type="journal article" date="2008" name="Mol. Cell">
        <title>Kinase-selective enrichment enables quantitative phosphoproteomics of the kinome across the cell cycle.</title>
        <authorList>
            <person name="Daub H."/>
            <person name="Olsen J.V."/>
            <person name="Bairlein M."/>
            <person name="Gnad F."/>
            <person name="Oppermann F.S."/>
            <person name="Korner R."/>
            <person name="Greff Z."/>
            <person name="Keri G."/>
            <person name="Stemmann O."/>
            <person name="Mann M."/>
        </authorList>
    </citation>
    <scope>IDENTIFICATION BY MASS SPECTROMETRY [LARGE SCALE ANALYSIS]</scope>
    <source>
        <tissue>Cervix carcinoma</tissue>
    </source>
</reference>
<reference key="8">
    <citation type="journal article" date="2008" name="Proc. Natl. Acad. Sci. U.S.A.">
        <title>A quantitative atlas of mitotic phosphorylation.</title>
        <authorList>
            <person name="Dephoure N."/>
            <person name="Zhou C."/>
            <person name="Villen J."/>
            <person name="Beausoleil S.A."/>
            <person name="Bakalarski C.E."/>
            <person name="Elledge S.J."/>
            <person name="Gygi S.P."/>
        </authorList>
    </citation>
    <scope>PHOSPHORYLATION [LARGE SCALE ANALYSIS] AT THR-45</scope>
    <scope>IDENTIFICATION BY MASS SPECTROMETRY [LARGE SCALE ANALYSIS]</scope>
    <source>
        <tissue>Cervix carcinoma</tissue>
    </source>
</reference>
<reference key="9">
    <citation type="journal article" date="2009" name="Sci. Signal.">
        <title>Quantitative phosphoproteomic analysis of T cell receptor signaling reveals system-wide modulation of protein-protein interactions.</title>
        <authorList>
            <person name="Mayya V."/>
            <person name="Lundgren D.H."/>
            <person name="Hwang S.-I."/>
            <person name="Rezaul K."/>
            <person name="Wu L."/>
            <person name="Eng J.K."/>
            <person name="Rodionov V."/>
            <person name="Han D.K."/>
        </authorList>
    </citation>
    <scope>IDENTIFICATION BY MASS SPECTROMETRY [LARGE SCALE ANALYSIS]</scope>
    <source>
        <tissue>Leukemic T-cell</tissue>
    </source>
</reference>
<reference key="10">
    <citation type="journal article" date="2013" name="J. Proteome Res.">
        <title>Toward a comprehensive characterization of a human cancer cell phosphoproteome.</title>
        <authorList>
            <person name="Zhou H."/>
            <person name="Di Palma S."/>
            <person name="Preisinger C."/>
            <person name="Peng M."/>
            <person name="Polat A.N."/>
            <person name="Heck A.J."/>
            <person name="Mohammed S."/>
        </authorList>
    </citation>
    <scope>IDENTIFICATION BY MASS SPECTROMETRY [LARGE SCALE ANALYSIS]</scope>
    <source>
        <tissue>Erythroleukemia</tissue>
    </source>
</reference>
<reference key="11">
    <citation type="journal article" date="2014" name="J. Proteomics">
        <title>An enzyme assisted RP-RPLC approach for in-depth analysis of human liver phosphoproteome.</title>
        <authorList>
            <person name="Bian Y."/>
            <person name="Song C."/>
            <person name="Cheng K."/>
            <person name="Dong M."/>
            <person name="Wang F."/>
            <person name="Huang J."/>
            <person name="Sun D."/>
            <person name="Wang L."/>
            <person name="Ye M."/>
            <person name="Zou H."/>
        </authorList>
    </citation>
    <scope>PHOSPHORYLATION [LARGE SCALE ANALYSIS] AT THR-45</scope>
    <scope>IDENTIFICATION BY MASS SPECTROMETRY [LARGE SCALE ANALYSIS]</scope>
    <source>
        <tissue>Liver</tissue>
    </source>
</reference>
<reference key="12">
    <citation type="journal article" date="2015" name="Nat. Genet.">
        <title>Mutations in SLC25A46, encoding a UGO1-like protein, cause an optic atrophy spectrum disorder.</title>
        <authorList>
            <person name="Abrams A.J."/>
            <person name="Hufnagel R.B."/>
            <person name="Rebelo A."/>
            <person name="Zanna C."/>
            <person name="Patel N."/>
            <person name="Gonzalez M.A."/>
            <person name="Campeanu I.J."/>
            <person name="Griffin L.B."/>
            <person name="Groenewald S."/>
            <person name="Strickland A.V."/>
            <person name="Tao F."/>
            <person name="Speziani F."/>
            <person name="Abreu L."/>
            <person name="Schuele R."/>
            <person name="Caporali L."/>
            <person name="La Morgia C."/>
            <person name="Maresca A."/>
            <person name="Liguori R."/>
            <person name="Lodi R."/>
            <person name="Ahmed Z.M."/>
            <person name="Sund K.L."/>
            <person name="Wang X."/>
            <person name="Krueger L.A."/>
            <person name="Peng Y."/>
            <person name="Prada C.E."/>
            <person name="Prows C.A."/>
            <person name="Schorry E.K."/>
            <person name="Antonellis A."/>
            <person name="Zimmerman H.H."/>
            <person name="Abdul-Rahman O.A."/>
            <person name="Yang Y."/>
            <person name="Downes S.M."/>
            <person name="Prince J."/>
            <person name="Fontanesi F."/>
            <person name="Barrientos A."/>
            <person name="Nemeth A.H."/>
            <person name="Carelli V."/>
            <person name="Huang T."/>
            <person name="Zuchner S."/>
            <person name="Dallman J.E."/>
        </authorList>
    </citation>
    <scope>FUNCTION</scope>
    <scope>SUBCELLULAR LOCATION</scope>
    <scope>INTERACTION WITH IMMT</scope>
    <scope>INVOLVEMENT IN HMSN6B</scope>
    <scope>VARIANTS HMSN6B ASP-249; LEU-333; ASP-335 AND CYS-340</scope>
</reference>
<reference key="13">
    <citation type="journal article" date="2016" name="Brain">
        <title>Loss of function of SLC25A46 causes lethal congenital pontocerebellar hypoplasia.</title>
        <authorList>
            <person name="Wan J."/>
            <person name="Steffen J."/>
            <person name="Yourshaw M."/>
            <person name="Mamsa H."/>
            <person name="Andersen E."/>
            <person name="Rudnik-Schoeneborn S."/>
            <person name="Pope K."/>
            <person name="Howell K.B."/>
            <person name="McLean C.A."/>
            <person name="Kornberg A.J."/>
            <person name="Joseph J."/>
            <person name="Lockhart P.J."/>
            <person name="Zerres K."/>
            <person name="Ryan M.M."/>
            <person name="Nelson S.F."/>
            <person name="Koehler C.M."/>
            <person name="Jen J.C."/>
        </authorList>
    </citation>
    <scope>INVOLVEMENT IN PCH1E</scope>
    <scope>VARIANT PCH1E PRO-341</scope>
    <scope>CHARACTERIZATION OF VARIANT PCH1E PRO-341</scope>
    <scope>CHARACTERIZATION OF VARIANTS HMSN6B ASP-249; LEU-333; ASP-335; CYS-340</scope>
    <scope>FUNCTION</scope>
    <scope>SUBCELLULAR LOCATION</scope>
</reference>
<reference key="14">
    <citation type="journal article" date="2016" name="EMBO Mol. Med.">
        <title>SLC25A46 is required for mitochondrial lipid homeostasis and cristae maintenance and is responsible for Leigh syndrome.</title>
        <authorList>
            <person name="Janer A."/>
            <person name="Prudent J."/>
            <person name="Paupe V."/>
            <person name="Fahiminiya S."/>
            <person name="Majewski J."/>
            <person name="Sgarioto N."/>
            <person name="Des Rosiers C."/>
            <person name="Forest A."/>
            <person name="Lin Z.Y."/>
            <person name="Gingras A.C."/>
            <person name="Mitchell G."/>
            <person name="McBride H.M."/>
            <person name="Shoubridge E.A."/>
        </authorList>
    </citation>
    <scope>VARIANT PCH1E ILE-142</scope>
    <scope>CHARACTERIZATION OF VARIANT PCH1E ILE-142</scope>
    <scope>FUNCTION</scope>
    <scope>INTERACTION WITH THE EMC AND MICOS COMPLEXES</scope>
    <scope>SUBCELLULAR LOCATION</scope>
</reference>
<reference key="15">
    <citation type="journal article" date="2016" name="Mov. Disord.">
        <title>SLC25A46 mutations underlie progressive myoclonic ataxia with optic atrophy and neuropathy.</title>
        <authorList>
            <person name="Charlesworth G."/>
            <person name="Balint B."/>
            <person name="Mencacci N.E."/>
            <person name="Carr L."/>
            <person name="Wood N.W."/>
            <person name="Bhatia K.P."/>
        </authorList>
    </citation>
    <scope>VARIANT HMSN6B ARG-138</scope>
</reference>
<reference key="16">
    <citation type="journal article" date="2017" name="Brain">
        <title>Pontocerebellar hypoplasia with spinal muscular atrophy (PCH1): identification of SLC25A46 mutations in the original Dutch PCH1 family.</title>
        <authorList>
            <person name="van Dijk T."/>
            <person name="Rudnik-Schoeneborn S."/>
            <person name="Senderek J."/>
            <person name="Hajmousa G."/>
            <person name="Mei H."/>
            <person name="Dusl M."/>
            <person name="Aronica E."/>
            <person name="Barth P."/>
            <person name="Baas F."/>
        </authorList>
    </citation>
    <scope>VARIANT PCH1E 231-ARG--ILE-418 DEL</scope>
</reference>
<reference key="17">
    <citation type="journal article" date="2018" name="Clin. Genet.">
        <title>Extension of the phenotype of biallelic loss-of-function mutations in SLC25A46 to the severe form of pontocerebellar hypoplasia type I.</title>
        <authorList>
            <person name="Braunisch M.C."/>
            <person name="Gallwitz H."/>
            <person name="Abicht A."/>
            <person name="Diebold I."/>
            <person name="Holinski-Feder E."/>
            <person name="Van Maldergem L."/>
            <person name="Lammens M."/>
            <person name="Kovacs-Nagy R."/>
            <person name="Alhaddad B."/>
            <person name="Strom T.M."/>
            <person name="Meitinger T."/>
            <person name="Senderek J."/>
            <person name="Rudnik-Schoeneborn S."/>
            <person name="Haack T.B."/>
        </authorList>
    </citation>
    <scope>VARIANTS PCH1E 14-TYR--ILE-418 DEL AND 246-ARG--ILE-418 DEL</scope>
</reference>
<comment type="function">
    <text evidence="4 5 7">Transmembrane protein of the mitochondrial outer membrane that controls mitochondrial organization (PubMed:26168012, PubMed:27390132, PubMed:27543974). May regulate the assembly of the MICOS (mitochondrial contact site and cristae organizing system) complex which is essential to the biogenesis and dynamics of mitochondrial cristae, the inwards folds of the inner mitochondrial membrane (PubMed:27390132). Through its interaction with the EMC (endoplasmic reticulum membrane protein complex), could regulate mitochondrial lipid homeostasis and thereby mitochondrial fission (PubMed:27390132).</text>
</comment>
<comment type="subunit">
    <text evidence="4 5">Associates with the mitochondrial contact site and cristae organizing system (MICOS) complex (PubMed:26168012, PubMed:27390132). May associate with the endoplasmic reticulum membrane protein complex (EMC) (PubMed:27390132).</text>
</comment>
<comment type="interaction">
    <interactant intactId="EBI-10281975">
        <id>Q96AG3</id>
    </interactant>
    <interactant intactId="EBI-13059134">
        <id>Q13520</id>
        <label>AQP6</label>
    </interactant>
    <organismsDiffer>false</organismsDiffer>
    <experiments>3</experiments>
</comment>
<comment type="interaction">
    <interactant intactId="EBI-10281975">
        <id>Q96AG3</id>
    </interactant>
    <interactant intactId="EBI-741101">
        <id>Q13643</id>
        <label>FHL3</label>
    </interactant>
    <organismsDiffer>false</organismsDiffer>
    <experiments>6</experiments>
</comment>
<comment type="interaction">
    <interactant intactId="EBI-10281975">
        <id>Q96AG3</id>
    </interactant>
    <interactant intactId="EBI-3059266">
        <id>Q8IVP5</id>
        <label>FUNDC1</label>
    </interactant>
    <organismsDiffer>false</organismsDiffer>
    <experiments>3</experiments>
</comment>
<comment type="interaction">
    <interactant intactId="EBI-10281975">
        <id>Q96AG3</id>
    </interactant>
    <interactant intactId="EBI-1052304">
        <id>Q8NBQ5</id>
        <label>HSD17B11</label>
    </interactant>
    <organismsDiffer>false</organismsDiffer>
    <experiments>3</experiments>
</comment>
<comment type="interaction">
    <interactant intactId="EBI-10281975">
        <id>Q96AG3</id>
    </interactant>
    <interactant intactId="EBI-18053395">
        <id>Q7Z5P4</id>
        <label>HSD17B13</label>
    </interactant>
    <organismsDiffer>false</organismsDiffer>
    <experiments>3</experiments>
</comment>
<comment type="interaction">
    <interactant intactId="EBI-10281975">
        <id>Q96AG3</id>
    </interactant>
    <interactant intactId="EBI-750776">
        <id>O95214</id>
        <label>LEPROTL1</label>
    </interactant>
    <organismsDiffer>false</organismsDiffer>
    <experiments>3</experiments>
</comment>
<comment type="interaction">
    <interactant intactId="EBI-10281975">
        <id>Q96AG3</id>
    </interactant>
    <interactant intactId="EBI-373355">
        <id>Q5SR56</id>
        <label>MFSD14B</label>
    </interactant>
    <organismsDiffer>false</organismsDiffer>
    <experiments>3</experiments>
</comment>
<comment type="interaction">
    <interactant intactId="EBI-10281975">
        <id>Q96AG3</id>
    </interactant>
    <interactant intactId="EBI-12382569">
        <id>Q2M2E3</id>
        <label>ODF4</label>
    </interactant>
    <organismsDiffer>false</organismsDiffer>
    <experiments>3</experiments>
</comment>
<comment type="interaction">
    <interactant intactId="EBI-10281975">
        <id>Q96AG3</id>
    </interactant>
    <interactant intactId="EBI-11337973">
        <id>Q9BRK0</id>
        <label>REEP2</label>
    </interactant>
    <organismsDiffer>false</organismsDiffer>
    <experiments>3</experiments>
</comment>
<comment type="interaction">
    <interactant intactId="EBI-10281975">
        <id>Q96AG3</id>
    </interactant>
    <interactant intactId="EBI-7545592">
        <id>Q9H6H4</id>
        <label>REEP4</label>
    </interactant>
    <organismsDiffer>false</organismsDiffer>
    <experiments>3</experiments>
</comment>
<comment type="interaction">
    <interactant intactId="EBI-10281975">
        <id>Q96AG3</id>
    </interactant>
    <interactant intactId="EBI-3923031">
        <id>Q14973</id>
        <label>SLC10A1</label>
    </interactant>
    <organismsDiffer>false</organismsDiffer>
    <experiments>3</experiments>
</comment>
<comment type="interaction">
    <interactant intactId="EBI-10281975">
        <id>Q96AG3</id>
    </interactant>
    <interactant intactId="EBI-18159983">
        <id>Q3KNW5</id>
        <label>SLC10A6</label>
    </interactant>
    <organismsDiffer>false</organismsDiffer>
    <experiments>3</experiments>
</comment>
<comment type="interaction">
    <interactant intactId="EBI-10281975">
        <id>Q96AG3</id>
    </interactant>
    <interactant intactId="EBI-3907610">
        <id>Q8N2U9</id>
        <label>SLC66A2</label>
    </interactant>
    <organismsDiffer>false</organismsDiffer>
    <experiments>3</experiments>
</comment>
<comment type="interaction">
    <interactant intactId="EBI-10281975">
        <id>Q96AG3</id>
    </interactant>
    <interactant intactId="EBI-13292283">
        <id>Q9UHI5</id>
        <label>SLC7A8</label>
    </interactant>
    <organismsDiffer>false</organismsDiffer>
    <experiments>3</experiments>
</comment>
<comment type="interaction">
    <interactant intactId="EBI-10281975">
        <id>Q96AG3</id>
    </interactant>
    <interactant intactId="EBI-1055364">
        <id>Q3ZAQ7</id>
        <label>VMA21</label>
    </interactant>
    <organismsDiffer>false</organismsDiffer>
    <experiments>3</experiments>
</comment>
<comment type="subcellular location">
    <subcellularLocation>
        <location evidence="4 5 7">Mitochondrion outer membrane</location>
        <topology evidence="2">Multi-pass membrane protein</topology>
    </subcellularLocation>
</comment>
<comment type="alternative products">
    <event type="alternative splicing"/>
    <isoform>
        <id>Q96AG3-1</id>
        <name>1</name>
        <sequence type="displayed"/>
    </isoform>
    <isoform>
        <id>Q96AG3-2</id>
        <name>2</name>
        <sequence type="described" ref="VSP_056112"/>
    </isoform>
    <isoform>
        <id>Q96AG3-3</id>
        <name>3</name>
        <sequence type="described" ref="VSP_056351"/>
    </isoform>
</comment>
<comment type="disease" evidence="4 6 7">
    <disease id="DI-04538">
        <name>Neuropathy, hereditary motor and sensory, 6B, with optic atrophy</name>
        <acronym>HMSN6B</acronym>
        <description>An autosomal recessive neurologic disorder characterized by early-onset optic atrophy, progressive visual loss, and peripheral sensorimotor neuropathy manifesting as axonal Charcot-Marie-Tooth disease, with variable age at onset and severity. Charcot-Marie-Tooth disease is a disorder of the peripheral nervous system, characterized by progressive weakness and atrophy, initially of the peroneal muscles and later of the distal muscles of the arms. It is classified in two main groups on the basis of electrophysiologic properties and histopathology: primary peripheral demyelinating neuropathies and primary peripheral axonal neuropathies. Peripheral axonal neuropathies are characterized by signs of axonal regeneration in the absence of obvious myelin alterations, and normal or slightly reduced nerve conduction velocities.</description>
        <dbReference type="MIM" id="616505"/>
    </disease>
    <text>The disease is caused by variants affecting the gene represented in this entry.</text>
</comment>
<comment type="disease" evidence="5 7 8 9">
    <disease id="DI-06092">
        <name>Pontocerebellar hypoplasia 1E</name>
        <acronym>PCH1E</acronym>
        <description>A form of pontocerebellar hypoplasia, a disorder characterized by structural defects of the pons and cerebellum, evident upon brain imaging. PCH1E is an autosomal recessive form characterized by severe hypotonia and respiratory insufficiency apparent soon after birth. Additional features may include optic atrophy, peripheral neuropathy, dysmorphic features, congenital contracture or foot deformities, and seizures. Death occurs in the first days or weeks of life. Postmortem brain imaging show pontocerebellar atrophy and loss of anterior motor neurons in the spinal cord.</description>
        <dbReference type="MIM" id="619303"/>
    </disease>
    <text>The disease is caused by variants affecting the gene represented in this entry.</text>
</comment>
<comment type="similarity">
    <text evidence="11">Belongs to the mitochondrial carrier (TC 2.A.29) family.</text>
</comment>
<comment type="sequence caution" evidence="11">
    <conflict type="erroneous initiation">
        <sequence resource="EMBL-CDS" id="AAA03587"/>
    </conflict>
    <text>Truncated N-terminus.</text>
</comment>
<accession>Q96AG3</accession>
<accession>A8K2F2</accession>
<accession>B3KRE6</accession>
<accession>B4DTA3</accession>
<accession>D3DSZ6</accession>
<accession>D6R9W7</accession>
<accession>Q04197</accession>
<sequence>MHPRRPDGFDGLGYRGGARDEQGFGGAFPARSFSTGSDLGHWVTTPPDIPGSRNLHWGEKSPPYGVPTTSTPYEGPTEEPFSSGGGGSVQGQSSEQLNRFAGFGIGLASLFTENVLAHPCIVLRRQCQVNYHAQHYHLTPFTVINIMYSFNKTQGPRALWKGMGSTFIVQGVTLGAEGIISEFTPLPREVLHKWSPKQIGEHLLLKSLTYVVAMPFYSASLIETVQSEIIRDNTGILECVKEGIGRVIGMGVPHSKRLLPLLSLIFPTVLHGVLHYIISSVIQKFVLLILKRKTYNSHLAESTSPVQSMLDAYFPELIANFAASLCSDVILYPLETVLHRLHIQGTRTIIDNTDLGYEVLPINTQYEGMRDCINTIRQEEGVFGFYKGFGAVIIQYTLHAAVLQITKIIYSTLLQNNI</sequence>
<evidence type="ECO:0000250" key="1">
    <source>
        <dbReference type="UniProtKB" id="Q9CQS4"/>
    </source>
</evidence>
<evidence type="ECO:0000255" key="2"/>
<evidence type="ECO:0000256" key="3">
    <source>
        <dbReference type="SAM" id="MobiDB-lite"/>
    </source>
</evidence>
<evidence type="ECO:0000269" key="4">
    <source>
    </source>
</evidence>
<evidence type="ECO:0000269" key="5">
    <source>
    </source>
</evidence>
<evidence type="ECO:0000269" key="6">
    <source>
    </source>
</evidence>
<evidence type="ECO:0000269" key="7">
    <source>
    </source>
</evidence>
<evidence type="ECO:0000269" key="8">
    <source>
    </source>
</evidence>
<evidence type="ECO:0000269" key="9">
    <source>
    </source>
</evidence>
<evidence type="ECO:0000303" key="10">
    <source>
    </source>
</evidence>
<evidence type="ECO:0000305" key="11"/>
<evidence type="ECO:0000312" key="12">
    <source>
        <dbReference type="HGNC" id="HGNC:25198"/>
    </source>
</evidence>
<evidence type="ECO:0007744" key="13">
    <source>
    </source>
</evidence>
<evidence type="ECO:0007744" key="14">
    <source>
    </source>
</evidence>
<proteinExistence type="evidence at protein level"/>
<protein>
    <recommendedName>
        <fullName evidence="11">Mitochondrial outer membrane protein SLC25A46</fullName>
    </recommendedName>
    <alternativeName>
        <fullName>Solute carrier family 25 member 46</fullName>
    </alternativeName>
</protein>
<dbReference type="EMBL" id="M74089">
    <property type="protein sequence ID" value="AAA03587.1"/>
    <property type="status" value="ALT_INIT"/>
    <property type="molecule type" value="mRNA"/>
</dbReference>
<dbReference type="EMBL" id="AK091427">
    <property type="protein sequence ID" value="BAG52358.1"/>
    <property type="molecule type" value="mRNA"/>
</dbReference>
<dbReference type="EMBL" id="AK290217">
    <property type="protein sequence ID" value="BAF82906.1"/>
    <property type="molecule type" value="mRNA"/>
</dbReference>
<dbReference type="EMBL" id="AK300123">
    <property type="protein sequence ID" value="BAG61915.1"/>
    <property type="molecule type" value="mRNA"/>
</dbReference>
<dbReference type="EMBL" id="AC008650">
    <property type="status" value="NOT_ANNOTATED_CDS"/>
    <property type="molecule type" value="Genomic_DNA"/>
</dbReference>
<dbReference type="EMBL" id="CH471086">
    <property type="protein sequence ID" value="EAW49040.1"/>
    <property type="molecule type" value="Genomic_DNA"/>
</dbReference>
<dbReference type="EMBL" id="CH471086">
    <property type="protein sequence ID" value="EAW49041.1"/>
    <property type="molecule type" value="Genomic_DNA"/>
</dbReference>
<dbReference type="EMBL" id="BC017169">
    <property type="protein sequence ID" value="AAH17169.1"/>
    <property type="molecule type" value="mRNA"/>
</dbReference>
<dbReference type="CCDS" id="CCDS4100.1">
    <molecule id="Q96AG3-1"/>
</dbReference>
<dbReference type="CCDS" id="CCDS78045.1">
    <molecule id="Q96AG3-3"/>
</dbReference>
<dbReference type="RefSeq" id="NP_001290178.1">
    <molecule id="Q96AG3-3"/>
    <property type="nucleotide sequence ID" value="NM_001303249.3"/>
</dbReference>
<dbReference type="RefSeq" id="NP_001290179.1">
    <property type="nucleotide sequence ID" value="NM_001303250.2"/>
</dbReference>
<dbReference type="RefSeq" id="NP_620128.1">
    <molecule id="Q96AG3-1"/>
    <property type="nucleotide sequence ID" value="NM_138773.4"/>
</dbReference>
<dbReference type="PDB" id="8TMU">
    <property type="method" value="X-ray"/>
    <property type="resolution" value="2.90 A"/>
    <property type="chains" value="E=98-107"/>
</dbReference>
<dbReference type="PDBsum" id="8TMU"/>
<dbReference type="SMR" id="Q96AG3"/>
<dbReference type="BioGRID" id="124798">
    <property type="interactions" value="268"/>
</dbReference>
<dbReference type="FunCoup" id="Q96AG3">
    <property type="interactions" value="1885"/>
</dbReference>
<dbReference type="IntAct" id="Q96AG3">
    <property type="interactions" value="56"/>
</dbReference>
<dbReference type="STRING" id="9606.ENSP00000348211"/>
<dbReference type="TCDB" id="2.A.29.30.1">
    <property type="family name" value="the mitochondrial carrier (mc) family"/>
</dbReference>
<dbReference type="GlyGen" id="Q96AG3">
    <property type="glycosylation" value="1 site"/>
</dbReference>
<dbReference type="iPTMnet" id="Q96AG3"/>
<dbReference type="PhosphoSitePlus" id="Q96AG3"/>
<dbReference type="SwissPalm" id="Q96AG3"/>
<dbReference type="BioMuta" id="SLC25A46"/>
<dbReference type="DMDM" id="74751740"/>
<dbReference type="jPOST" id="Q96AG3"/>
<dbReference type="MassIVE" id="Q96AG3"/>
<dbReference type="PaxDb" id="9606-ENSP00000348211"/>
<dbReference type="PeptideAtlas" id="Q96AG3"/>
<dbReference type="ProteomicsDB" id="3595"/>
<dbReference type="ProteomicsDB" id="5092"/>
<dbReference type="ProteomicsDB" id="75961">
    <molecule id="Q96AG3-1"/>
</dbReference>
<dbReference type="Pumba" id="Q96AG3"/>
<dbReference type="Antibodypedia" id="13498">
    <property type="antibodies" value="116 antibodies from 23 providers"/>
</dbReference>
<dbReference type="DNASU" id="91137"/>
<dbReference type="Ensembl" id="ENST00000355943.8">
    <molecule id="Q96AG3-1"/>
    <property type="protein sequence ID" value="ENSP00000348211.3"/>
    <property type="gene ID" value="ENSG00000164209.17"/>
</dbReference>
<dbReference type="Ensembl" id="ENST00000447245.6">
    <molecule id="Q96AG3-3"/>
    <property type="protein sequence ID" value="ENSP00000399717.2"/>
    <property type="gene ID" value="ENSG00000164209.17"/>
</dbReference>
<dbReference type="Ensembl" id="ENST00000504098.1">
    <molecule id="Q96AG3-2"/>
    <property type="protein sequence ID" value="ENSP00000425708.1"/>
    <property type="gene ID" value="ENSG00000164209.17"/>
</dbReference>
<dbReference type="GeneID" id="91137"/>
<dbReference type="KEGG" id="hsa:91137"/>
<dbReference type="MANE-Select" id="ENST00000355943.8">
    <property type="protein sequence ID" value="ENSP00000348211.3"/>
    <property type="RefSeq nucleotide sequence ID" value="NM_138773.4"/>
    <property type="RefSeq protein sequence ID" value="NP_620128.1"/>
</dbReference>
<dbReference type="UCSC" id="uc003koz.5">
    <molecule id="Q96AG3-1"/>
    <property type="organism name" value="human"/>
</dbReference>
<dbReference type="AGR" id="HGNC:25198"/>
<dbReference type="CTD" id="91137"/>
<dbReference type="DisGeNET" id="91137"/>
<dbReference type="GeneCards" id="SLC25A46"/>
<dbReference type="HGNC" id="HGNC:25198">
    <property type="gene designation" value="SLC25A46"/>
</dbReference>
<dbReference type="HPA" id="ENSG00000164209">
    <property type="expression patterns" value="Low tissue specificity"/>
</dbReference>
<dbReference type="MalaCards" id="SLC25A46"/>
<dbReference type="MIM" id="610826">
    <property type="type" value="gene"/>
</dbReference>
<dbReference type="MIM" id="616505">
    <property type="type" value="phenotype"/>
</dbReference>
<dbReference type="MIM" id="619303">
    <property type="type" value="phenotype"/>
</dbReference>
<dbReference type="neXtProt" id="NX_Q96AG3"/>
<dbReference type="OpenTargets" id="ENSG00000164209"/>
<dbReference type="Orphanet" id="90120">
    <property type="disease" value="Hereditary motor and sensory neuropathy type 6"/>
</dbReference>
<dbReference type="Orphanet" id="2254">
    <property type="disease" value="Pontocerebellar hypoplasia type 1"/>
</dbReference>
<dbReference type="PharmGKB" id="PA162403737"/>
<dbReference type="VEuPathDB" id="HostDB:ENSG00000164209"/>
<dbReference type="eggNOG" id="KOG2954">
    <property type="taxonomic scope" value="Eukaryota"/>
</dbReference>
<dbReference type="GeneTree" id="ENSGT00390000015874"/>
<dbReference type="HOGENOM" id="CLU_047010_0_0_1"/>
<dbReference type="InParanoid" id="Q96AG3"/>
<dbReference type="OMA" id="RQCQVNH"/>
<dbReference type="OrthoDB" id="2403262at2759"/>
<dbReference type="PAN-GO" id="Q96AG3">
    <property type="GO annotations" value="3 GO annotations based on evolutionary models"/>
</dbReference>
<dbReference type="PhylomeDB" id="Q96AG3"/>
<dbReference type="TreeFam" id="TF313365"/>
<dbReference type="PathwayCommons" id="Q96AG3"/>
<dbReference type="SignaLink" id="Q96AG3"/>
<dbReference type="BioGRID-ORCS" id="91137">
    <property type="hits" value="29 hits in 1161 CRISPR screens"/>
</dbReference>
<dbReference type="CD-CODE" id="FB4E32DD">
    <property type="entry name" value="Presynaptic clusters and postsynaptic densities"/>
</dbReference>
<dbReference type="ChiTaRS" id="SLC25A46">
    <property type="organism name" value="human"/>
</dbReference>
<dbReference type="GenomeRNAi" id="91137"/>
<dbReference type="Pharos" id="Q96AG3">
    <property type="development level" value="Tbio"/>
</dbReference>
<dbReference type="PRO" id="PR:Q96AG3"/>
<dbReference type="Proteomes" id="UP000005640">
    <property type="component" value="Chromosome 5"/>
</dbReference>
<dbReference type="RNAct" id="Q96AG3">
    <property type="molecule type" value="protein"/>
</dbReference>
<dbReference type="Bgee" id="ENSG00000164209">
    <property type="expression patterns" value="Expressed in secondary oocyte and 210 other cell types or tissues"/>
</dbReference>
<dbReference type="ExpressionAtlas" id="Q96AG3">
    <property type="expression patterns" value="baseline and differential"/>
</dbReference>
<dbReference type="GO" id="GO:0005741">
    <property type="term" value="C:mitochondrial outer membrane"/>
    <property type="evidence" value="ECO:0000314"/>
    <property type="project" value="UniProtKB"/>
</dbReference>
<dbReference type="GO" id="GO:0005739">
    <property type="term" value="C:mitochondrion"/>
    <property type="evidence" value="ECO:0000314"/>
    <property type="project" value="HPA"/>
</dbReference>
<dbReference type="GO" id="GO:0044877">
    <property type="term" value="F:protein-containing complex binding"/>
    <property type="evidence" value="ECO:0000314"/>
    <property type="project" value="UniProtKB"/>
</dbReference>
<dbReference type="GO" id="GO:0000422">
    <property type="term" value="P:autophagy of mitochondrion"/>
    <property type="evidence" value="ECO:0007669"/>
    <property type="project" value="Ensembl"/>
</dbReference>
<dbReference type="GO" id="GO:0061564">
    <property type="term" value="P:axon development"/>
    <property type="evidence" value="ECO:0000318"/>
    <property type="project" value="GO_Central"/>
</dbReference>
<dbReference type="GO" id="GO:0021702">
    <property type="term" value="P:cerebellar Purkinje cell differentiation"/>
    <property type="evidence" value="ECO:0007669"/>
    <property type="project" value="Ensembl"/>
</dbReference>
<dbReference type="GO" id="GO:0042407">
    <property type="term" value="P:cristae formation"/>
    <property type="evidence" value="ECO:0000315"/>
    <property type="project" value="UniProtKB"/>
</dbReference>
<dbReference type="GO" id="GO:0016358">
    <property type="term" value="P:dendrite development"/>
    <property type="evidence" value="ECO:0007669"/>
    <property type="project" value="Ensembl"/>
</dbReference>
<dbReference type="GO" id="GO:0051649">
    <property type="term" value="P:establishment of localization in cell"/>
    <property type="evidence" value="ECO:0007669"/>
    <property type="project" value="Ensembl"/>
</dbReference>
<dbReference type="GO" id="GO:0031987">
    <property type="term" value="P:locomotion involved in locomotory behavior"/>
    <property type="evidence" value="ECO:0007669"/>
    <property type="project" value="Ensembl"/>
</dbReference>
<dbReference type="GO" id="GO:0000266">
    <property type="term" value="P:mitochondrial fission"/>
    <property type="evidence" value="ECO:0000314"/>
    <property type="project" value="UniProtKB"/>
</dbReference>
<dbReference type="GO" id="GO:0090149">
    <property type="term" value="P:mitochondrial membrane fission"/>
    <property type="evidence" value="ECO:0007669"/>
    <property type="project" value="InterPro"/>
</dbReference>
<dbReference type="GO" id="GO:0006839">
    <property type="term" value="P:mitochondrial transport"/>
    <property type="evidence" value="ECO:0007669"/>
    <property type="project" value="Ensembl"/>
</dbReference>
<dbReference type="GO" id="GO:0022011">
    <property type="term" value="P:myelination in peripheral nervous system"/>
    <property type="evidence" value="ECO:0007669"/>
    <property type="project" value="Ensembl"/>
</dbReference>
<dbReference type="GO" id="GO:0021554">
    <property type="term" value="P:optic nerve development"/>
    <property type="evidence" value="ECO:0007669"/>
    <property type="project" value="Ensembl"/>
</dbReference>
<dbReference type="GO" id="GO:0048936">
    <property type="term" value="P:peripheral nervous system neuron axonogenesis"/>
    <property type="evidence" value="ECO:0007669"/>
    <property type="project" value="Ensembl"/>
</dbReference>
<dbReference type="GO" id="GO:0055091">
    <property type="term" value="P:phospholipid homeostasis"/>
    <property type="evidence" value="ECO:0000315"/>
    <property type="project" value="UniProtKB"/>
</dbReference>
<dbReference type="GO" id="GO:0065003">
    <property type="term" value="P:protein-containing complex assembly"/>
    <property type="evidence" value="ECO:0000315"/>
    <property type="project" value="UniProtKB"/>
</dbReference>
<dbReference type="GO" id="GO:0008535">
    <property type="term" value="P:respiratory chain complex IV assembly"/>
    <property type="evidence" value="ECO:0000315"/>
    <property type="project" value="UniProtKB"/>
</dbReference>
<dbReference type="GO" id="GO:0007416">
    <property type="term" value="P:synapse assembly"/>
    <property type="evidence" value="ECO:0007669"/>
    <property type="project" value="Ensembl"/>
</dbReference>
<dbReference type="FunFam" id="1.50.40.10:FF:000057">
    <property type="entry name" value="Solute carrier family 25 member 46"/>
    <property type="match status" value="1"/>
</dbReference>
<dbReference type="Gene3D" id="1.50.40.10">
    <property type="entry name" value="Mitochondrial carrier domain"/>
    <property type="match status" value="2"/>
</dbReference>
<dbReference type="InterPro" id="IPR018108">
    <property type="entry name" value="Mitochondrial_sb/sol_carrier"/>
</dbReference>
<dbReference type="InterPro" id="IPR023395">
    <property type="entry name" value="Mt_carrier_dom_sf"/>
</dbReference>
<dbReference type="InterPro" id="IPR039158">
    <property type="entry name" value="SLC25A46"/>
</dbReference>
<dbReference type="PANTHER" id="PTHR21252:SF2">
    <property type="entry name" value="MITOCHONDRIAL OUTER MEMBRANE PROTEIN SLC25A46"/>
    <property type="match status" value="1"/>
</dbReference>
<dbReference type="PANTHER" id="PTHR21252">
    <property type="entry name" value="TB1 PROTEIN-RELATED"/>
    <property type="match status" value="1"/>
</dbReference>
<dbReference type="Pfam" id="PF00153">
    <property type="entry name" value="Mito_carr"/>
    <property type="match status" value="2"/>
</dbReference>
<dbReference type="SUPFAM" id="SSF103506">
    <property type="entry name" value="Mitochondrial carrier"/>
    <property type="match status" value="1"/>
</dbReference>
<dbReference type="PROSITE" id="PS50920">
    <property type="entry name" value="SOLCAR"/>
    <property type="match status" value="1"/>
</dbReference>
<name>S2546_HUMAN</name>
<feature type="chain" id="PRO_0000291828" description="Mitochondrial outer membrane protein SLC25A46">
    <location>
        <begin position="1"/>
        <end position="418"/>
    </location>
</feature>
<feature type="transmembrane region" description="Helical; Name=1" evidence="2">
    <location>
        <begin position="103"/>
        <end position="123"/>
    </location>
</feature>
<feature type="transmembrane region" description="Helical; Name=2" evidence="2">
    <location>
        <begin position="167"/>
        <end position="187"/>
    </location>
</feature>
<feature type="transmembrane region" description="Helical; Name=3" evidence="2">
    <location>
        <begin position="202"/>
        <end position="222"/>
    </location>
</feature>
<feature type="transmembrane region" description="Helical; Name=4" evidence="2">
    <location>
        <begin position="258"/>
        <end position="278"/>
    </location>
</feature>
<feature type="transmembrane region" description="Helical; Name=5" evidence="2">
    <location>
        <begin position="314"/>
        <end position="334"/>
    </location>
</feature>
<feature type="transmembrane region" description="Helical; Name=6" evidence="2">
    <location>
        <begin position="382"/>
        <end position="402"/>
    </location>
</feature>
<feature type="repeat" description="Solcar 1">
    <location>
        <begin position="96"/>
        <end position="187"/>
    </location>
</feature>
<feature type="repeat" description="Solcar 2">
    <location>
        <begin position="311"/>
        <end position="413"/>
    </location>
</feature>
<feature type="region of interest" description="Disordered" evidence="3">
    <location>
        <begin position="1"/>
        <end position="30"/>
    </location>
</feature>
<feature type="region of interest" description="Disordered" evidence="3">
    <location>
        <begin position="44"/>
        <end position="93"/>
    </location>
</feature>
<feature type="modified residue" description="Phosphoserine" evidence="1">
    <location>
        <position position="32"/>
    </location>
</feature>
<feature type="modified residue" description="Phosphothreonine" evidence="13 14">
    <location>
        <position position="45"/>
    </location>
</feature>
<feature type="splice variant" id="VSP_056112" description="In isoform 2." evidence="10">
    <location>
        <begin position="1"/>
        <end position="146"/>
    </location>
</feature>
<feature type="splice variant" id="VSP_056351" description="In isoform 3." evidence="10">
    <location>
        <begin position="225"/>
        <end position="305"/>
    </location>
</feature>
<feature type="sequence variant" id="VAR_085718" description="In PCH1E." evidence="9">
    <location>
        <begin position="14"/>
        <end position="418"/>
    </location>
</feature>
<feature type="sequence variant" id="VAR_085719" description="In HMSN6B; uncertain significance; dbSNP:rs1057519295." evidence="6">
    <original>L</original>
    <variation>R</variation>
    <location>
        <position position="138"/>
    </location>
</feature>
<feature type="sequence variant" id="VAR_085720" description="In PCH1E; loss of protein expression; dbSNP:rs1057519296." evidence="5">
    <original>T</original>
    <variation>I</variation>
    <location>
        <position position="142"/>
    </location>
</feature>
<feature type="sequence variant" id="VAR_085721" description="In PCH1E." evidence="8">
    <location>
        <begin position="231"/>
        <end position="418"/>
    </location>
</feature>
<feature type="sequence variant" id="VAR_085722" description="In PCH1E." evidence="9">
    <location>
        <begin position="246"/>
        <end position="418"/>
    </location>
</feature>
<feature type="sequence variant" id="VAR_075818" description="In HMSN6B; uncertain significance; no effect on protein abundance; dbSNP:rs200725073." evidence="4 7">
    <original>G</original>
    <variation>D</variation>
    <location>
        <position position="249"/>
    </location>
</feature>
<feature type="sequence variant" id="VAR_075819" description="In HMSN6B; decreased protein abundance; dbSNP:rs1057518750." evidence="4 7">
    <original>P</original>
    <variation>L</variation>
    <location>
        <position position="333"/>
    </location>
</feature>
<feature type="sequence variant" id="VAR_075820" description="In HMSN6B; uncertain significance; slightly decreased protein abundance; dbSNP:rs1057518748." evidence="4 7">
    <original>E</original>
    <variation>D</variation>
    <location>
        <position position="335"/>
    </location>
</feature>
<feature type="sequence variant" id="VAR_075821" description="In HMSN6B; slightly decreased protein abundance; dbSNP:rs746681765." evidence="4 7">
    <original>R</original>
    <variation>C</variation>
    <location>
        <position position="340"/>
    </location>
</feature>
<feature type="sequence variant" id="VAR_085723" description="In PCH1E; decreased protein abundance; loss of function in mitochondrial fission; no effect on localization to the mitochondrial outer membrane; dbSNP:rs1057519294." evidence="7">
    <original>L</original>
    <variation>P</variation>
    <location>
        <position position="341"/>
    </location>
</feature>
<keyword id="KW-0002">3D-structure</keyword>
<keyword id="KW-0025">Alternative splicing</keyword>
<keyword id="KW-0144">Charcot-Marie-Tooth disease</keyword>
<keyword id="KW-0225">Disease variant</keyword>
<keyword id="KW-0472">Membrane</keyword>
<keyword id="KW-0496">Mitochondrion</keyword>
<keyword id="KW-1000">Mitochondrion outer membrane</keyword>
<keyword id="KW-0523">Neurodegeneration</keyword>
<keyword id="KW-0622">Neuropathy</keyword>
<keyword id="KW-0597">Phosphoprotein</keyword>
<keyword id="KW-1267">Proteomics identification</keyword>
<keyword id="KW-1185">Reference proteome</keyword>
<keyword id="KW-0677">Repeat</keyword>
<keyword id="KW-0812">Transmembrane</keyword>
<keyword id="KW-1133">Transmembrane helix</keyword>
<keyword id="KW-0813">Transport</keyword>